<comment type="function">
    <text evidence="4">Cytochrome P450 monooxygenase; part of the gene cluster that mediates the biosynthesis of aculenes, a unique type of norsesquiterpenes that contain a nordaucane skeleton linked to an L-proline moiety and are of mixed biosynthetic origin (PubMed:31618514). The pathway begins with the synthesis of dauca-4,7-diene by the terpene cyclase aneC using farnesyl pyrophosphate (FPP) as substrate (PubMed:31618514). The cytochrome P450 monooxygenase aneF then performs the initial oxidation at C-12 of dauca-4,7-diene to yield asperaculane D (PubMed:31618514). Asperaculane D is substrate of the cytochrome P450 monooxygenase aneD for C-10 hydroxylation to yield asperaculane E (PubMed:31618514). The cytochrome P450 monooxygenase aneG then converts asperaculane E into aculene D via C-2 oxidation (PubMed:31618514). The monomodular nonribosomal peptide synthtase aneB adenylates L-proline and the thiohydrolase aneE transfers this activated L-proline derivative to aculenes D and C to produce respectively aculenes B and A (PubMed:31618514). The dioxygenase aneA converts aculene D into aculene C, and aculene B into aculene A by introducing the 5,6-alkene moiety (PubMed:31618514). Asperculanes A, B, C and F, as well as 14-prolyl asperculane C, might be shunt products of the pathway (PubMed:31618514).</text>
</comment>
<comment type="catalytic activity">
    <reaction evidence="4">
        <text>dauca-4,7-diene + 3 reduced [NADPH--hemoprotein reductase] + 3 O2 = asperaculane D + 3 oxidized [NADPH--hemoprotein reductase] + 4 H2O + 4 H(+)</text>
        <dbReference type="Rhea" id="RHEA:65076"/>
        <dbReference type="Rhea" id="RHEA-COMP:11964"/>
        <dbReference type="Rhea" id="RHEA-COMP:11965"/>
        <dbReference type="ChEBI" id="CHEBI:15377"/>
        <dbReference type="ChEBI" id="CHEBI:15378"/>
        <dbReference type="ChEBI" id="CHEBI:15379"/>
        <dbReference type="ChEBI" id="CHEBI:57618"/>
        <dbReference type="ChEBI" id="CHEBI:58210"/>
        <dbReference type="ChEBI" id="CHEBI:155906"/>
        <dbReference type="ChEBI" id="CHEBI:155907"/>
    </reaction>
    <physiologicalReaction direction="left-to-right" evidence="4">
        <dbReference type="Rhea" id="RHEA:65077"/>
    </physiologicalReaction>
</comment>
<comment type="cofactor">
    <cofactor evidence="1">
        <name>heme</name>
        <dbReference type="ChEBI" id="CHEBI:30413"/>
    </cofactor>
</comment>
<comment type="pathway">
    <text evidence="4">Secondary metabolite biosynthesis.</text>
</comment>
<comment type="subcellular location">
    <subcellularLocation>
        <location evidence="2">Membrane</location>
        <topology evidence="2">Single-pass membrane protein</topology>
    </subcellularLocation>
</comment>
<comment type="disruption phenotype">
    <text evidence="4">Abolishes the formation of aculene A and accumulates dauca-4,7-diene.</text>
</comment>
<comment type="similarity">
    <text evidence="6">Belongs to the cytochrome P450 family.</text>
</comment>
<proteinExistence type="evidence at protein level"/>
<gene>
    <name evidence="5" type="primary">aneF</name>
    <name type="ORF">ASPACDRAFT_78841</name>
</gene>
<name>ANEF_ASPA1</name>
<dbReference type="EC" id="1.-.-.-" evidence="4"/>
<dbReference type="EMBL" id="KV878977">
    <property type="protein sequence ID" value="OJJ99917.1"/>
    <property type="molecule type" value="Genomic_DNA"/>
</dbReference>
<dbReference type="RefSeq" id="XP_020056257.1">
    <property type="nucleotide sequence ID" value="XM_020205278.1"/>
</dbReference>
<dbReference type="SMR" id="A0A1L9WVI3"/>
<dbReference type="STRING" id="690307.A0A1L9WVI3"/>
<dbReference type="GlyCosmos" id="A0A1L9WVI3">
    <property type="glycosylation" value="1 site, No reported glycans"/>
</dbReference>
<dbReference type="GeneID" id="30979092"/>
<dbReference type="VEuPathDB" id="FungiDB:ASPACDRAFT_78841"/>
<dbReference type="OMA" id="FCFAGTD"/>
<dbReference type="OrthoDB" id="3945418at2759"/>
<dbReference type="Proteomes" id="UP000184546">
    <property type="component" value="Unassembled WGS sequence"/>
</dbReference>
<dbReference type="GO" id="GO:0016020">
    <property type="term" value="C:membrane"/>
    <property type="evidence" value="ECO:0007669"/>
    <property type="project" value="UniProtKB-SubCell"/>
</dbReference>
<dbReference type="GO" id="GO:0020037">
    <property type="term" value="F:heme binding"/>
    <property type="evidence" value="ECO:0007669"/>
    <property type="project" value="InterPro"/>
</dbReference>
<dbReference type="GO" id="GO:0005506">
    <property type="term" value="F:iron ion binding"/>
    <property type="evidence" value="ECO:0007669"/>
    <property type="project" value="InterPro"/>
</dbReference>
<dbReference type="GO" id="GO:0004497">
    <property type="term" value="F:monooxygenase activity"/>
    <property type="evidence" value="ECO:0007669"/>
    <property type="project" value="UniProtKB-KW"/>
</dbReference>
<dbReference type="GO" id="GO:0016705">
    <property type="term" value="F:oxidoreductase activity, acting on paired donors, with incorporation or reduction of molecular oxygen"/>
    <property type="evidence" value="ECO:0007669"/>
    <property type="project" value="InterPro"/>
</dbReference>
<dbReference type="CDD" id="cd11062">
    <property type="entry name" value="CYP58-like"/>
    <property type="match status" value="1"/>
</dbReference>
<dbReference type="Gene3D" id="1.10.630.10">
    <property type="entry name" value="Cytochrome P450"/>
    <property type="match status" value="1"/>
</dbReference>
<dbReference type="InterPro" id="IPR001128">
    <property type="entry name" value="Cyt_P450"/>
</dbReference>
<dbReference type="InterPro" id="IPR017972">
    <property type="entry name" value="Cyt_P450_CS"/>
</dbReference>
<dbReference type="InterPro" id="IPR002401">
    <property type="entry name" value="Cyt_P450_E_grp-I"/>
</dbReference>
<dbReference type="InterPro" id="IPR036396">
    <property type="entry name" value="Cyt_P450_sf"/>
</dbReference>
<dbReference type="InterPro" id="IPR050121">
    <property type="entry name" value="Cytochrome_P450_monoxygenase"/>
</dbReference>
<dbReference type="PANTHER" id="PTHR24305">
    <property type="entry name" value="CYTOCHROME P450"/>
    <property type="match status" value="1"/>
</dbReference>
<dbReference type="PANTHER" id="PTHR24305:SF166">
    <property type="entry name" value="CYTOCHROME P450 12A4, MITOCHONDRIAL-RELATED"/>
    <property type="match status" value="1"/>
</dbReference>
<dbReference type="Pfam" id="PF00067">
    <property type="entry name" value="p450"/>
    <property type="match status" value="1"/>
</dbReference>
<dbReference type="PRINTS" id="PR00463">
    <property type="entry name" value="EP450I"/>
</dbReference>
<dbReference type="PRINTS" id="PR00385">
    <property type="entry name" value="P450"/>
</dbReference>
<dbReference type="SUPFAM" id="SSF48264">
    <property type="entry name" value="Cytochrome P450"/>
    <property type="match status" value="1"/>
</dbReference>
<dbReference type="PROSITE" id="PS00086">
    <property type="entry name" value="CYTOCHROME_P450"/>
    <property type="match status" value="1"/>
</dbReference>
<accession>A0A1L9WVI3</accession>
<feature type="chain" id="PRO_0000449094" description="Cytochrome P450 monooxygenase aneF">
    <location>
        <begin position="1"/>
        <end position="495"/>
    </location>
</feature>
<feature type="transmembrane region" description="Helical" evidence="2">
    <location>
        <begin position="1"/>
        <end position="21"/>
    </location>
</feature>
<feature type="binding site" description="axial binding residue" evidence="1">
    <location>
        <position position="437"/>
    </location>
    <ligand>
        <name>heme</name>
        <dbReference type="ChEBI" id="CHEBI:30413"/>
    </ligand>
    <ligandPart>
        <name>Fe</name>
        <dbReference type="ChEBI" id="CHEBI:18248"/>
    </ligandPart>
</feature>
<feature type="glycosylation site" description="N-linked (GlcNAc...) asparagine" evidence="3">
    <location>
        <position position="47"/>
    </location>
</feature>
<protein>
    <recommendedName>
        <fullName evidence="5">Cytochrome P450 monooxygenase aneF</fullName>
        <ecNumber evidence="4">1.-.-.-</ecNumber>
    </recommendedName>
    <alternativeName>
        <fullName evidence="5">Aculenes biosynthesis cluster protein F</fullName>
    </alternativeName>
</protein>
<evidence type="ECO:0000250" key="1">
    <source>
        <dbReference type="UniProtKB" id="P04798"/>
    </source>
</evidence>
<evidence type="ECO:0000255" key="2"/>
<evidence type="ECO:0000255" key="3">
    <source>
        <dbReference type="PROSITE-ProRule" id="PRU00498"/>
    </source>
</evidence>
<evidence type="ECO:0000269" key="4">
    <source>
    </source>
</evidence>
<evidence type="ECO:0000303" key="5">
    <source>
    </source>
</evidence>
<evidence type="ECO:0000305" key="6"/>
<sequence>MIAGLVLVVLLTKYLQRVFLHPLSKFPGPSIAAVSHLWEFWHDWVKNGTFLEGVADLHRSYKSPVVRIAPNHLHVNDVEVYHQVFKVNTNFYKAPYFYEAFGFATSIATITNPHRHKPLRTTVAPMFTGTAVDGMSDEMYDMVRKATDLLAARSTGTGNKFNVMQFLRCITTDVSCNLIFGETLDLVSNGYHSDRFLGNLDTFVENVWIMVHAPWIAQFALMLPNSLTDKIVPGYAYFREQCISWIDKVRARRAKGITLMRNGRPTLFDVLMDDNPDKNYKVPSKSELIDQAFLFAIAGTDTTSMATTFAVFHILNNPAVRERLCEELRGASAIIRDQYNYREVRKLPYLSAVIKEALRMSSPFPGRLPRVVPPEGMKLDNKFVPGGTIISISSRCIMDDPKIYPEPEKFLPERWMGENAKSMDRNMIAFGKGSRSCLGTNLAYLKMYTMLSTMFCRWDLRLVSPTDHKLRYLDHALIEMKSQVVVEILADHWTT</sequence>
<organism>
    <name type="scientific">Aspergillus aculeatus (strain ATCC 16872 / CBS 172.66 / WB 5094)</name>
    <dbReference type="NCBI Taxonomy" id="690307"/>
    <lineage>
        <taxon>Eukaryota</taxon>
        <taxon>Fungi</taxon>
        <taxon>Dikarya</taxon>
        <taxon>Ascomycota</taxon>
        <taxon>Pezizomycotina</taxon>
        <taxon>Eurotiomycetes</taxon>
        <taxon>Eurotiomycetidae</taxon>
        <taxon>Eurotiales</taxon>
        <taxon>Aspergillaceae</taxon>
        <taxon>Aspergillus</taxon>
        <taxon>Aspergillus subgen. Circumdati</taxon>
    </lineage>
</organism>
<reference key="1">
    <citation type="journal article" date="2017" name="Genome Biol.">
        <title>Comparative genomics reveals high biological diversity and specific adaptations in the industrially and medically important fungal genus Aspergillus.</title>
        <authorList>
            <person name="de Vries R.P."/>
            <person name="Riley R."/>
            <person name="Wiebenga A."/>
            <person name="Aguilar-Osorio G."/>
            <person name="Amillis S."/>
            <person name="Uchima C.A."/>
            <person name="Anderluh G."/>
            <person name="Asadollahi M."/>
            <person name="Askin M."/>
            <person name="Barry K."/>
            <person name="Battaglia E."/>
            <person name="Bayram O."/>
            <person name="Benocci T."/>
            <person name="Braus-Stromeyer S.A."/>
            <person name="Caldana C."/>
            <person name="Canovas D."/>
            <person name="Cerqueira G.C."/>
            <person name="Chen F."/>
            <person name="Chen W."/>
            <person name="Choi C."/>
            <person name="Clum A."/>
            <person name="Dos Santos R.A."/>
            <person name="Damasio A.R."/>
            <person name="Diallinas G."/>
            <person name="Emri T."/>
            <person name="Fekete E."/>
            <person name="Flipphi M."/>
            <person name="Freyberg S."/>
            <person name="Gallo A."/>
            <person name="Gournas C."/>
            <person name="Habgood R."/>
            <person name="Hainaut M."/>
            <person name="Harispe M.L."/>
            <person name="Henrissat B."/>
            <person name="Hilden K.S."/>
            <person name="Hope R."/>
            <person name="Hossain A."/>
            <person name="Karabika E."/>
            <person name="Karaffa L."/>
            <person name="Karanyi Z."/>
            <person name="Krasevec N."/>
            <person name="Kuo A."/>
            <person name="Kusch H."/>
            <person name="LaButti K."/>
            <person name="Lagendijk E.L."/>
            <person name="Lapidus A."/>
            <person name="Levasseur A."/>
            <person name="Lindquist E."/>
            <person name="Lipzen A."/>
            <person name="Logrieco A.F."/>
            <person name="MacCabe A."/>
            <person name="Maekelae M.R."/>
            <person name="Malavazi I."/>
            <person name="Melin P."/>
            <person name="Meyer V."/>
            <person name="Mielnichuk N."/>
            <person name="Miskei M."/>
            <person name="Molnar A.P."/>
            <person name="Mule G."/>
            <person name="Ngan C.Y."/>
            <person name="Orejas M."/>
            <person name="Orosz E."/>
            <person name="Ouedraogo J.P."/>
            <person name="Overkamp K.M."/>
            <person name="Park H.-S."/>
            <person name="Perrone G."/>
            <person name="Piumi F."/>
            <person name="Punt P.J."/>
            <person name="Ram A.F."/>
            <person name="Ramon A."/>
            <person name="Rauscher S."/>
            <person name="Record E."/>
            <person name="Riano-Pachon D.M."/>
            <person name="Robert V."/>
            <person name="Roehrig J."/>
            <person name="Ruller R."/>
            <person name="Salamov A."/>
            <person name="Salih N.S."/>
            <person name="Samson R.A."/>
            <person name="Sandor E."/>
            <person name="Sanguinetti M."/>
            <person name="Schuetze T."/>
            <person name="Sepcic K."/>
            <person name="Shelest E."/>
            <person name="Sherlock G."/>
            <person name="Sophianopoulou V."/>
            <person name="Squina F.M."/>
            <person name="Sun H."/>
            <person name="Susca A."/>
            <person name="Todd R.B."/>
            <person name="Tsang A."/>
            <person name="Unkles S.E."/>
            <person name="van de Wiele N."/>
            <person name="van Rossen-Uffink D."/>
            <person name="Oliveira J.V."/>
            <person name="Vesth T.C."/>
            <person name="Visser J."/>
            <person name="Yu J.-H."/>
            <person name="Zhou M."/>
            <person name="Andersen M.R."/>
            <person name="Archer D.B."/>
            <person name="Baker S.E."/>
            <person name="Benoit I."/>
            <person name="Brakhage A.A."/>
            <person name="Braus G.H."/>
            <person name="Fischer R."/>
            <person name="Frisvad J.C."/>
            <person name="Goldman G.H."/>
            <person name="Houbraken J."/>
            <person name="Oakley B."/>
            <person name="Pocsi I."/>
            <person name="Scazzocchio C."/>
            <person name="Seiboth B."/>
            <person name="vanKuyk P.A."/>
            <person name="Wortman J."/>
            <person name="Dyer P.S."/>
            <person name="Grigoriev I.V."/>
        </authorList>
    </citation>
    <scope>NUCLEOTIDE SEQUENCE [LARGE SCALE GENOMIC DNA]</scope>
    <source>
        <strain>ATCC 16872 / CBS 172.66 / WB 5094</strain>
    </source>
</reference>
<reference key="2">
    <citation type="journal article" date="2019" name="Angew. Chem. Int. Ed.">
        <title>The biosynthesis of norsesquiterpene aculenes requires three cytochrome P450 enzymes to catalyze a stepwise demethylation process.</title>
        <authorList>
            <person name="Lee C.F."/>
            <person name="Chen L.X."/>
            <person name="Chiang C.Y."/>
            <person name="Lai C.Y."/>
            <person name="Lin H.C."/>
        </authorList>
    </citation>
    <scope>FUNCTION</scope>
    <scope>DISRUPTION PHENOTYPE</scope>
    <scope>CATALYTIC ACTIVITY</scope>
    <scope>PATHWAY</scope>
</reference>
<keyword id="KW-0325">Glycoprotein</keyword>
<keyword id="KW-0349">Heme</keyword>
<keyword id="KW-0408">Iron</keyword>
<keyword id="KW-0472">Membrane</keyword>
<keyword id="KW-0479">Metal-binding</keyword>
<keyword id="KW-0503">Monooxygenase</keyword>
<keyword id="KW-0560">Oxidoreductase</keyword>
<keyword id="KW-1185">Reference proteome</keyword>
<keyword id="KW-0812">Transmembrane</keyword>
<keyword id="KW-1133">Transmembrane helix</keyword>